<dbReference type="EMBL" id="CH471076">
    <property type="protein sequence ID" value="EAW74172.1"/>
    <property type="molecule type" value="Genomic_DNA"/>
</dbReference>
<dbReference type="EMBL" id="BC002782">
    <property type="protein sequence ID" value="AAH02782.3"/>
    <property type="molecule type" value="mRNA"/>
</dbReference>
<dbReference type="EMBL" id="BC007540">
    <property type="protein sequence ID" value="AAH07540.2"/>
    <property type="molecule type" value="mRNA"/>
</dbReference>
<dbReference type="EMBL" id="BC056402">
    <property type="protein sequence ID" value="AAH56402.1"/>
    <property type="molecule type" value="mRNA"/>
</dbReference>
<dbReference type="EMBL" id="CR749697">
    <property type="protein sequence ID" value="CAH18477.1"/>
    <property type="molecule type" value="mRNA"/>
</dbReference>
<dbReference type="CCDS" id="CCDS31594.1"/>
<dbReference type="RefSeq" id="NP_612480.1">
    <property type="nucleotide sequence ID" value="NM_138471.3"/>
</dbReference>
<dbReference type="PDB" id="7CNA">
    <property type="method" value="X-ray"/>
    <property type="resolution" value="1.60 A"/>
    <property type="chains" value="B/E=254-283"/>
</dbReference>
<dbReference type="PDB" id="7E9M">
    <property type="method" value="X-ray"/>
    <property type="resolution" value="2.50 A"/>
    <property type="chains" value="B/D=256-282"/>
</dbReference>
<dbReference type="PDB" id="7EA1">
    <property type="method" value="X-ray"/>
    <property type="resolution" value="2.70 A"/>
    <property type="chains" value="B/D=228-239"/>
</dbReference>
<dbReference type="PDBsum" id="7CNA"/>
<dbReference type="PDBsum" id="7E9M"/>
<dbReference type="PDBsum" id="7EA1"/>
<dbReference type="SMR" id="Q9BUA3"/>
<dbReference type="BioGRID" id="126827">
    <property type="interactions" value="62"/>
</dbReference>
<dbReference type="FunCoup" id="Q9BUA3">
    <property type="interactions" value="1218"/>
</dbReference>
<dbReference type="IntAct" id="Q9BUA3">
    <property type="interactions" value="28"/>
</dbReference>
<dbReference type="STRING" id="9606.ENSP00000294244"/>
<dbReference type="GlyGen" id="Q9BUA3">
    <property type="glycosylation" value="1 site, 1 O-linked glycan (1 site)"/>
</dbReference>
<dbReference type="iPTMnet" id="Q9BUA3"/>
<dbReference type="PhosphoSitePlus" id="Q9BUA3"/>
<dbReference type="BioMuta" id="C11orf84"/>
<dbReference type="DMDM" id="74733196"/>
<dbReference type="jPOST" id="Q9BUA3"/>
<dbReference type="MassIVE" id="Q9BUA3"/>
<dbReference type="PaxDb" id="9606-ENSP00000294244"/>
<dbReference type="PeptideAtlas" id="Q9BUA3"/>
<dbReference type="ProteomicsDB" id="79066"/>
<dbReference type="Pumba" id="Q9BUA3"/>
<dbReference type="Antibodypedia" id="51569">
    <property type="antibodies" value="44 antibodies from 11 providers"/>
</dbReference>
<dbReference type="DNASU" id="144097"/>
<dbReference type="Ensembl" id="ENST00000294244.9">
    <property type="protein sequence ID" value="ENSP00000294244.3"/>
    <property type="gene ID" value="ENSG00000168005.9"/>
</dbReference>
<dbReference type="GeneID" id="144097"/>
<dbReference type="KEGG" id="hsa:144097"/>
<dbReference type="MANE-Select" id="ENST00000294244.9">
    <property type="protein sequence ID" value="ENSP00000294244.3"/>
    <property type="RefSeq nucleotide sequence ID" value="NM_138471.3"/>
    <property type="RefSeq protein sequence ID" value="NP_612480.1"/>
</dbReference>
<dbReference type="UCSC" id="uc001nxt.4">
    <property type="organism name" value="human"/>
</dbReference>
<dbReference type="AGR" id="HGNC:25115"/>
<dbReference type="CTD" id="144097"/>
<dbReference type="DisGeNET" id="144097"/>
<dbReference type="GeneCards" id="SPINDOC"/>
<dbReference type="HGNC" id="HGNC:25115">
    <property type="gene designation" value="SPINDOC"/>
</dbReference>
<dbReference type="HPA" id="ENSG00000168005">
    <property type="expression patterns" value="Low tissue specificity"/>
</dbReference>
<dbReference type="neXtProt" id="NX_Q9BUA3"/>
<dbReference type="OpenTargets" id="ENSG00000168005"/>
<dbReference type="PharmGKB" id="PA162377769"/>
<dbReference type="VEuPathDB" id="HostDB:ENSG00000168005"/>
<dbReference type="eggNOG" id="ENOG502S4I6">
    <property type="taxonomic scope" value="Eukaryota"/>
</dbReference>
<dbReference type="GeneTree" id="ENSGT00410000025985"/>
<dbReference type="HOGENOM" id="CLU_061399_0_0_1"/>
<dbReference type="InParanoid" id="Q9BUA3"/>
<dbReference type="OMA" id="GDTPDWP"/>
<dbReference type="OrthoDB" id="8962639at2759"/>
<dbReference type="PAN-GO" id="Q9BUA3">
    <property type="GO annotations" value="1 GO annotation based on evolutionary models"/>
</dbReference>
<dbReference type="PhylomeDB" id="Q9BUA3"/>
<dbReference type="TreeFam" id="TF337165"/>
<dbReference type="PathwayCommons" id="Q9BUA3"/>
<dbReference type="SignaLink" id="Q9BUA3"/>
<dbReference type="BioGRID-ORCS" id="144097">
    <property type="hits" value="24 hits in 1127 CRISPR screens"/>
</dbReference>
<dbReference type="ChiTaRS" id="C11orf84">
    <property type="organism name" value="human"/>
</dbReference>
<dbReference type="GenomeRNAi" id="144097"/>
<dbReference type="Pharos" id="Q9BUA3">
    <property type="development level" value="Tdark"/>
</dbReference>
<dbReference type="PRO" id="PR:Q9BUA3"/>
<dbReference type="Proteomes" id="UP000005640">
    <property type="component" value="Chromosome 11"/>
</dbReference>
<dbReference type="RNAct" id="Q9BUA3">
    <property type="molecule type" value="protein"/>
</dbReference>
<dbReference type="Bgee" id="ENSG00000168005">
    <property type="expression patterns" value="Expressed in left testis and 134 other cell types or tissues"/>
</dbReference>
<dbReference type="ExpressionAtlas" id="Q9BUA3">
    <property type="expression patterns" value="baseline and differential"/>
</dbReference>
<dbReference type="GO" id="GO:0005634">
    <property type="term" value="C:nucleus"/>
    <property type="evidence" value="ECO:0000314"/>
    <property type="project" value="UniProtKB"/>
</dbReference>
<dbReference type="GO" id="GO:0090734">
    <property type="term" value="C:site of DNA damage"/>
    <property type="evidence" value="ECO:0000314"/>
    <property type="project" value="UniProtKB"/>
</dbReference>
<dbReference type="GO" id="GO:0006974">
    <property type="term" value="P:DNA damage response"/>
    <property type="evidence" value="ECO:0000314"/>
    <property type="project" value="UniProtKB"/>
</dbReference>
<dbReference type="GO" id="GO:0045892">
    <property type="term" value="P:negative regulation of DNA-templated transcription"/>
    <property type="evidence" value="ECO:0000314"/>
    <property type="project" value="UniProtKB"/>
</dbReference>
<dbReference type="GO" id="GO:0010835">
    <property type="term" value="P:regulation of protein ADP-ribosylation"/>
    <property type="evidence" value="ECO:0000314"/>
    <property type="project" value="UniProtKB"/>
</dbReference>
<dbReference type="InterPro" id="IPR040647">
    <property type="entry name" value="SPIN-DOC_Znf-C2H2"/>
</dbReference>
<dbReference type="InterPro" id="IPR052675">
    <property type="entry name" value="ZnF_transloc-Spindlin_int"/>
</dbReference>
<dbReference type="PANTHER" id="PTHR34589">
    <property type="entry name" value="SIMILAR TO RIKEN CDNA 2700081O15"/>
    <property type="match status" value="1"/>
</dbReference>
<dbReference type="PANTHER" id="PTHR34589:SF1">
    <property type="entry name" value="SPINDLIN INTERACTOR AND REPRESSOR OF CHROMATIN-BINDING PROTEIN"/>
    <property type="match status" value="1"/>
</dbReference>
<dbReference type="Pfam" id="PF18658">
    <property type="entry name" value="zf-C2H2_12"/>
    <property type="match status" value="1"/>
</dbReference>
<proteinExistence type="evidence at protein level"/>
<evidence type="ECO:0000256" key="1">
    <source>
        <dbReference type="SAM" id="MobiDB-lite"/>
    </source>
</evidence>
<evidence type="ECO:0000269" key="2">
    <source>
    </source>
</evidence>
<evidence type="ECO:0000269" key="3">
    <source>
    </source>
</evidence>
<evidence type="ECO:0000269" key="4">
    <source>
    </source>
</evidence>
<evidence type="ECO:0000269" key="5">
    <source ref="3"/>
</evidence>
<evidence type="ECO:0000303" key="6">
    <source>
    </source>
</evidence>
<evidence type="ECO:0000305" key="7"/>
<evidence type="ECO:0000312" key="8">
    <source>
        <dbReference type="HGNC" id="HGNC:25115"/>
    </source>
</evidence>
<evidence type="ECO:0007744" key="9">
    <source>
        <dbReference type="PDB" id="7CNA"/>
    </source>
</evidence>
<evidence type="ECO:0007744" key="10">
    <source>
    </source>
</evidence>
<evidence type="ECO:0007744" key="11">
    <source>
    </source>
</evidence>
<evidence type="ECO:0007744" key="12">
    <source>
    </source>
</evidence>
<evidence type="ECO:0007744" key="13">
    <source>
    </source>
</evidence>
<evidence type="ECO:0007744" key="14">
    <source>
    </source>
</evidence>
<evidence type="ECO:0007744" key="15">
    <source>
    </source>
</evidence>
<evidence type="ECO:0007744" key="16">
    <source>
    </source>
</evidence>
<evidence type="ECO:0007744" key="17">
    <source>
    </source>
</evidence>
<evidence type="ECO:0007744" key="18">
    <source>
    </source>
</evidence>
<evidence type="ECO:0007829" key="19">
    <source>
        <dbReference type="PDB" id="7CNA"/>
    </source>
</evidence>
<reference key="1">
    <citation type="submission" date="2005-07" db="EMBL/GenBank/DDBJ databases">
        <authorList>
            <person name="Mural R.J."/>
            <person name="Istrail S."/>
            <person name="Sutton G.G."/>
            <person name="Florea L."/>
            <person name="Halpern A.L."/>
            <person name="Mobarry C.M."/>
            <person name="Lippert R."/>
            <person name="Walenz B."/>
            <person name="Shatkay H."/>
            <person name="Dew I."/>
            <person name="Miller J.R."/>
            <person name="Flanigan M.J."/>
            <person name="Edwards N.J."/>
            <person name="Bolanos R."/>
            <person name="Fasulo D."/>
            <person name="Halldorsson B.V."/>
            <person name="Hannenhalli S."/>
            <person name="Turner R."/>
            <person name="Yooseph S."/>
            <person name="Lu F."/>
            <person name="Nusskern D.R."/>
            <person name="Shue B.C."/>
            <person name="Zheng X.H."/>
            <person name="Zhong F."/>
            <person name="Delcher A.L."/>
            <person name="Huson D.H."/>
            <person name="Kravitz S.A."/>
            <person name="Mouchard L."/>
            <person name="Reinert K."/>
            <person name="Remington K.A."/>
            <person name="Clark A.G."/>
            <person name="Waterman M.S."/>
            <person name="Eichler E.E."/>
            <person name="Adams M.D."/>
            <person name="Hunkapiller M.W."/>
            <person name="Myers E.W."/>
            <person name="Venter J.C."/>
        </authorList>
    </citation>
    <scope>NUCLEOTIDE SEQUENCE [LARGE SCALE GENOMIC DNA]</scope>
</reference>
<reference key="2">
    <citation type="journal article" date="2004" name="Genome Res.">
        <title>The status, quality, and expansion of the NIH full-length cDNA project: the Mammalian Gene Collection (MGC).</title>
        <authorList>
            <consortium name="The MGC Project Team"/>
        </authorList>
    </citation>
    <scope>NUCLEOTIDE SEQUENCE [LARGE SCALE MRNA]</scope>
    <source>
        <tissue>Brain</tissue>
        <tissue>Uterus</tissue>
    </source>
</reference>
<reference key="3">
    <citation type="submission" date="2008-12" db="UniProtKB">
        <authorList>
            <person name="Bienvenut W.V."/>
            <person name="Calvo F."/>
            <person name="Matallanas D."/>
            <person name="Cooper W.N."/>
            <person name="Zebisch A."/>
            <person name="Kolch W."/>
        </authorList>
    </citation>
    <scope>PROTEIN SEQUENCE OF 108-143; 171-190; 195-212 AND 295-344</scope>
    <scope>PHOSPHORYLATION AT SER-308</scope>
    <scope>IDENTIFICATION BY MASS SPECTROMETRY</scope>
    <source>
        <tissue>Cervix carcinoma</tissue>
        <tissue>Colon carcinoma</tissue>
        <tissue>Mammary carcinoma</tissue>
    </source>
</reference>
<reference key="4">
    <citation type="journal article" date="2007" name="BMC Genomics">
        <title>The full-ORF clone resource of the German cDNA consortium.</title>
        <authorList>
            <person name="Bechtel S."/>
            <person name="Rosenfelder H."/>
            <person name="Duda A."/>
            <person name="Schmidt C.P."/>
            <person name="Ernst U."/>
            <person name="Wellenreuther R."/>
            <person name="Mehrle A."/>
            <person name="Schuster C."/>
            <person name="Bahr A."/>
            <person name="Bloecker H."/>
            <person name="Heubner D."/>
            <person name="Hoerlein A."/>
            <person name="Michel G."/>
            <person name="Wedler H."/>
            <person name="Koehrer K."/>
            <person name="Ottenwaelder B."/>
            <person name="Poustka A."/>
            <person name="Wiemann S."/>
            <person name="Schupp I."/>
        </authorList>
    </citation>
    <scope>NUCLEOTIDE SEQUENCE [LARGE SCALE MRNA] OF 291-381</scope>
    <source>
        <tissue>Melanoma</tissue>
    </source>
</reference>
<reference key="5">
    <citation type="journal article" date="2006" name="Cell">
        <title>Global, in vivo, and site-specific phosphorylation dynamics in signaling networks.</title>
        <authorList>
            <person name="Olsen J.V."/>
            <person name="Blagoev B."/>
            <person name="Gnad F."/>
            <person name="Macek B."/>
            <person name="Kumar C."/>
            <person name="Mortensen P."/>
            <person name="Mann M."/>
        </authorList>
    </citation>
    <scope>IDENTIFICATION BY MASS SPECTROMETRY [LARGE SCALE ANALYSIS]</scope>
    <source>
        <tissue>Cervix carcinoma</tissue>
    </source>
</reference>
<reference key="6">
    <citation type="journal article" date="2008" name="J. Proteome Res.">
        <title>Combining protein-based IMAC, peptide-based IMAC, and MudPIT for efficient phosphoproteomic analysis.</title>
        <authorList>
            <person name="Cantin G.T."/>
            <person name="Yi W."/>
            <person name="Lu B."/>
            <person name="Park S.K."/>
            <person name="Xu T."/>
            <person name="Lee J.-D."/>
            <person name="Yates J.R. III"/>
        </authorList>
    </citation>
    <scope>IDENTIFICATION BY MASS SPECTROMETRY [LARGE SCALE ANALYSIS]</scope>
    <source>
        <tissue>Cervix carcinoma</tissue>
    </source>
</reference>
<reference key="7">
    <citation type="journal article" date="2008" name="Proc. Natl. Acad. Sci. U.S.A.">
        <title>A quantitative atlas of mitotic phosphorylation.</title>
        <authorList>
            <person name="Dephoure N."/>
            <person name="Zhou C."/>
            <person name="Villen J."/>
            <person name="Beausoleil S.A."/>
            <person name="Bakalarski C.E."/>
            <person name="Elledge S.J."/>
            <person name="Gygi S.P."/>
        </authorList>
    </citation>
    <scope>PHOSPHORYLATION [LARGE SCALE ANALYSIS] AT SER-148 AND SER-308</scope>
    <scope>IDENTIFICATION BY MASS SPECTROMETRY [LARGE SCALE ANALYSIS]</scope>
    <source>
        <tissue>Cervix carcinoma</tissue>
    </source>
</reference>
<reference key="8">
    <citation type="journal article" date="2009" name="Anal. Chem.">
        <title>Lys-N and trypsin cover complementary parts of the phosphoproteome in a refined SCX-based approach.</title>
        <authorList>
            <person name="Gauci S."/>
            <person name="Helbig A.O."/>
            <person name="Slijper M."/>
            <person name="Krijgsveld J."/>
            <person name="Heck A.J."/>
            <person name="Mohammed S."/>
        </authorList>
    </citation>
    <scope>IDENTIFICATION BY MASS SPECTROMETRY [LARGE SCALE ANALYSIS]</scope>
</reference>
<reference key="9">
    <citation type="journal article" date="2009" name="Sci. Signal.">
        <title>Quantitative phosphoproteomic analysis of T cell receptor signaling reveals system-wide modulation of protein-protein interactions.</title>
        <authorList>
            <person name="Mayya V."/>
            <person name="Lundgren D.H."/>
            <person name="Hwang S.-I."/>
            <person name="Rezaul K."/>
            <person name="Wu L."/>
            <person name="Eng J.K."/>
            <person name="Rodionov V."/>
            <person name="Han D.K."/>
        </authorList>
    </citation>
    <scope>PHOSPHORYLATION [LARGE SCALE ANALYSIS] AT SER-148 AND SER-248</scope>
    <scope>IDENTIFICATION BY MASS SPECTROMETRY [LARGE SCALE ANALYSIS]</scope>
    <source>
        <tissue>Leukemic T-cell</tissue>
    </source>
</reference>
<reference key="10">
    <citation type="journal article" date="2010" name="Sci. Signal.">
        <title>Quantitative phosphoproteomics reveals widespread full phosphorylation site occupancy during mitosis.</title>
        <authorList>
            <person name="Olsen J.V."/>
            <person name="Vermeulen M."/>
            <person name="Santamaria A."/>
            <person name="Kumar C."/>
            <person name="Miller M.L."/>
            <person name="Jensen L.J."/>
            <person name="Gnad F."/>
            <person name="Cox J."/>
            <person name="Jensen T.S."/>
            <person name="Nigg E.A."/>
            <person name="Brunak S."/>
            <person name="Mann M."/>
        </authorList>
    </citation>
    <scope>PHOSPHORYLATION [LARGE SCALE ANALYSIS] AT SER-308 AND SER-310</scope>
    <scope>IDENTIFICATION BY MASS SPECTROMETRY [LARGE SCALE ANALYSIS]</scope>
    <source>
        <tissue>Cervix carcinoma</tissue>
    </source>
</reference>
<reference key="11">
    <citation type="journal article" date="2011" name="Sci. Signal.">
        <title>System-wide temporal characterization of the proteome and phosphoproteome of human embryonic stem cell differentiation.</title>
        <authorList>
            <person name="Rigbolt K.T."/>
            <person name="Prokhorova T.A."/>
            <person name="Akimov V."/>
            <person name="Henningsen J."/>
            <person name="Johansen P.T."/>
            <person name="Kratchmarova I."/>
            <person name="Kassem M."/>
            <person name="Mann M."/>
            <person name="Olsen J.V."/>
            <person name="Blagoev B."/>
        </authorList>
    </citation>
    <scope>PHOSPHORYLATION [LARGE SCALE ANALYSIS] AT SER-148 AND SER-308</scope>
    <scope>IDENTIFICATION BY MASS SPECTROMETRY [LARGE SCALE ANALYSIS]</scope>
</reference>
<reference key="12">
    <citation type="journal article" date="2013" name="J. Proteome Res.">
        <title>Toward a comprehensive characterization of a human cancer cell phosphoproteome.</title>
        <authorList>
            <person name="Zhou H."/>
            <person name="Di Palma S."/>
            <person name="Preisinger C."/>
            <person name="Peng M."/>
            <person name="Polat A.N."/>
            <person name="Heck A.J."/>
            <person name="Mohammed S."/>
        </authorList>
    </citation>
    <scope>PHOSPHORYLATION [LARGE SCALE ANALYSIS] AT SER-121; SER-148; SER-248; SER-251 AND SER-308</scope>
    <scope>IDENTIFICATION BY MASS SPECTROMETRY [LARGE SCALE ANALYSIS]</scope>
    <source>
        <tissue>Cervix carcinoma</tissue>
        <tissue>Erythroleukemia</tissue>
    </source>
</reference>
<reference key="13">
    <citation type="journal article" date="2014" name="Nat. Struct. Mol. Biol.">
        <title>Uncovering global SUMOylation signaling networks in a site-specific manner.</title>
        <authorList>
            <person name="Hendriks I.A."/>
            <person name="D'Souza R.C."/>
            <person name="Yang B."/>
            <person name="Verlaan-de Vries M."/>
            <person name="Mann M."/>
            <person name="Vertegaal A.C."/>
        </authorList>
    </citation>
    <scope>SUMOYLATION [LARGE SCALE ANALYSIS] AT LYS-220; LYS-290 AND LYS-374</scope>
    <scope>IDENTIFICATION BY MASS SPECTROMETRY [LARGE SCALE ANALYSIS]</scope>
</reference>
<reference key="14">
    <citation type="journal article" date="2015" name="Cell Rep.">
        <title>SUMO-2 orchestrates chromatin modifiers in response to DNA damage.</title>
        <authorList>
            <person name="Hendriks I.A."/>
            <person name="Treffers L.W."/>
            <person name="Verlaan-de Vries M."/>
            <person name="Olsen J.V."/>
            <person name="Vertegaal A.C."/>
        </authorList>
    </citation>
    <scope>SUMOYLATION [LARGE SCALE ANALYSIS] AT LYS-220 AND LYS-374</scope>
    <scope>IDENTIFICATION BY MASS SPECTROMETRY [LARGE SCALE ANALYSIS]</scope>
</reference>
<reference key="15">
    <citation type="journal article" date="2015" name="Mol. Cell. Proteomics">
        <title>System-wide analysis of SUMOylation dynamics in response to replication stress reveals novel small ubiquitin-like modified target proteins and acceptor lysines relevant for genome stability.</title>
        <authorList>
            <person name="Xiao Z."/>
            <person name="Chang J.G."/>
            <person name="Hendriks I.A."/>
            <person name="Sigurdsson J.O."/>
            <person name="Olsen J.V."/>
            <person name="Vertegaal A.C."/>
        </authorList>
    </citation>
    <scope>SUMOYLATION [LARGE SCALE ANALYSIS] AT LYS-220 AND LYS-374</scope>
    <scope>IDENTIFICATION BY MASS SPECTROMETRY [LARGE SCALE ANALYSIS]</scope>
</reference>
<reference key="16">
    <citation type="journal article" date="2017" name="J. Biol. Chem.">
        <title>A transcriptional coregulator, SPIN-DOC, attenuates the coactivator activity of Spindlin1.</title>
        <authorList>
            <person name="Bae N."/>
            <person name="Gao M."/>
            <person name="Li X."/>
            <person name="Premkumar T."/>
            <person name="Sbardella G."/>
            <person name="Chen J."/>
            <person name="Bedford M.T."/>
        </authorList>
    </citation>
    <scope>SUBCELLULAR LOCATION</scope>
    <scope>INTERACTION WITH SPIN1; SPIN2A; SPIN2B; SPIN3; SPIN4 AND TCF7L2</scope>
</reference>
<reference key="17">
    <citation type="journal article" date="2017" name="Nat. Struct. Mol. Biol.">
        <title>Site-specific mapping of the human SUMO proteome reveals co-modification with phosphorylation.</title>
        <authorList>
            <person name="Hendriks I.A."/>
            <person name="Lyon D."/>
            <person name="Young C."/>
            <person name="Jensen L.J."/>
            <person name="Vertegaal A.C."/>
            <person name="Nielsen M.L."/>
        </authorList>
    </citation>
    <scope>SUMOYLATION [LARGE SCALE ANALYSIS] AT LYS-48; LYS-189; LYS-220; LYS-290; LYS-294 AND LYS-374</scope>
    <scope>IDENTIFICATION BY MASS SPECTROMETRY [LARGE SCALE ANALYSIS]</scope>
</reference>
<reference key="18">
    <citation type="journal article" date="2021" name="Nat. Commun.">
        <title>SPINDOC binds PARP1 to facilitate PARylation.</title>
        <authorList>
            <person name="Yang F."/>
            <person name="Chen J."/>
            <person name="Liu B."/>
            <person name="Gao G."/>
            <person name="Sebastian M."/>
            <person name="Jeter C."/>
            <person name="Shen J."/>
            <person name="Person M.D."/>
            <person name="Bedford M.T."/>
        </authorList>
    </citation>
    <scope>FUNCTION</scope>
    <scope>SUBCELLULAR LOCATION</scope>
    <scope>INTERACTION WITH PARP1</scope>
</reference>
<reference evidence="9" key="19">
    <citation type="journal article" date="2021" name="Nat. Commun.">
        <title>Structural mechanism of bivalent histone H3K4me3K9me3 recognition by the Spindlin1/C11orf84 complex in rRNA transcription activation.</title>
        <authorList>
            <person name="Du Y."/>
            <person name="Yan Y."/>
            <person name="Xie S."/>
            <person name="Huang H."/>
            <person name="Wang X."/>
            <person name="Ng R.K."/>
            <person name="Zhou M.M."/>
            <person name="Qian C."/>
        </authorList>
    </citation>
    <scope>X-RAY CRYSTALLOGRAPHY (1.60 ANGSTROMS) OF 254-283 IN COMPLEX WITH SPIN1</scope>
    <scope>FUNCTION</scope>
    <scope>INTERACTION WITH SPIN1</scope>
</reference>
<keyword id="KW-0002">3D-structure</keyword>
<keyword id="KW-0158">Chromosome</keyword>
<keyword id="KW-0903">Direct protein sequencing</keyword>
<keyword id="KW-0227">DNA damage</keyword>
<keyword id="KW-1017">Isopeptide bond</keyword>
<keyword id="KW-0539">Nucleus</keyword>
<keyword id="KW-0597">Phosphoprotein</keyword>
<keyword id="KW-1267">Proteomics identification</keyword>
<keyword id="KW-1185">Reference proteome</keyword>
<keyword id="KW-0678">Repressor</keyword>
<keyword id="KW-0804">Transcription</keyword>
<keyword id="KW-0805">Transcription regulation</keyword>
<keyword id="KW-0832">Ubl conjugation</keyword>
<protein>
    <recommendedName>
        <fullName evidence="7">Spindlin interactor and repressor of chromatin-binding protein</fullName>
    </recommendedName>
    <alternativeName>
        <fullName evidence="6">SPIN1-docking protein</fullName>
        <shortName evidence="6">SPIN-DOC</shortName>
    </alternativeName>
</protein>
<name>SPNDC_HUMAN</name>
<comment type="function">
    <text evidence="3 4">Chromatin protein that stabilizes SPIN1 and enhances its association with histone H3 trimethylated at both 'Lys-4' and 'Lys-9' (H3K4me3K9me3) (PubMed:33574238). Positively regulates poly-ADP-ribosylation in response to DNA damage; acts by facilitating PARP1 ADP-ribosyltransferase activity (PubMed:34737271).</text>
</comment>
<comment type="subunit">
    <text evidence="2 3 4">Interacts with SPIN1, SPIN2A, SPIN2B, SPIN3 and SPIN4 (PubMed:29061846, PubMed:33574238). Interacts with TCF7L2 in a SPIN1-dependent manner (PubMed:29061846). Interacts with PARP1; promoting PARP1 ADP-ribosyltransferase activity (PubMed:34737271).</text>
</comment>
<comment type="interaction">
    <interactant intactId="EBI-1773488">
        <id>Q9BUA3</id>
    </interactant>
    <interactant intactId="EBI-741158">
        <id>Q96HA8</id>
        <label>NTAQ1</label>
    </interactant>
    <organismsDiffer>false</organismsDiffer>
    <experiments>3</experiments>
</comment>
<comment type="interaction">
    <interactant intactId="EBI-1773488">
        <id>Q9BUA3</id>
    </interactant>
    <interactant intactId="EBI-348567">
        <id>O75928-2</id>
        <label>PIAS2</label>
    </interactant>
    <organismsDiffer>false</organismsDiffer>
    <experiments>3</experiments>
</comment>
<comment type="interaction">
    <interactant intactId="EBI-1773488">
        <id>Q9BUA3</id>
    </interactant>
    <interactant intactId="EBI-1642527">
        <id>Q5JUX0</id>
        <label>SPIN3</label>
    </interactant>
    <organismsDiffer>false</organismsDiffer>
    <experiments>4</experiments>
</comment>
<comment type="interaction">
    <interactant intactId="EBI-1773488">
        <id>Q9BUA3</id>
    </interactant>
    <interactant intactId="EBI-1052596">
        <id>P31930</id>
        <label>UQCRC1</label>
    </interactant>
    <organismsDiffer>false</organismsDiffer>
    <experiments>3</experiments>
</comment>
<comment type="subcellular location">
    <subcellularLocation>
        <location evidence="2">Nucleus</location>
    </subcellularLocation>
    <subcellularLocation>
        <location evidence="4">Chromosome</location>
    </subcellularLocation>
    <text evidence="4">Colocalizes with PARP1 to sites of DNA damage.</text>
</comment>
<comment type="induction">
    <text evidence="4">In response to DNA damage; expression is regulated by KLF4.</text>
</comment>
<comment type="caution">
    <text evidence="2 3">Was initially reported to inhibit the ability of SPIN1 to bind methylated histones (PubMed:29061846). However, it was later shown to play an opposite role and promote SPIN1 association with bivalent H3K4me3K9me3 mark (PubMed:33574238).</text>
</comment>
<feature type="chain" id="PRO_0000321528" description="Spindlin interactor and repressor of chromatin-binding protein">
    <location>
        <begin position="1"/>
        <end position="381"/>
    </location>
</feature>
<feature type="region of interest" description="Disordered" evidence="1">
    <location>
        <begin position="42"/>
        <end position="73"/>
    </location>
</feature>
<feature type="region of interest" description="Disordered" evidence="1">
    <location>
        <begin position="144"/>
        <end position="264"/>
    </location>
</feature>
<feature type="region of interest" description="Disordered" evidence="1">
    <location>
        <begin position="283"/>
        <end position="320"/>
    </location>
</feature>
<feature type="region of interest" description="Disordered" evidence="1">
    <location>
        <begin position="339"/>
        <end position="381"/>
    </location>
</feature>
<feature type="compositionally biased region" description="Basic and acidic residues" evidence="1">
    <location>
        <begin position="218"/>
        <end position="228"/>
    </location>
</feature>
<feature type="compositionally biased region" description="Basic and acidic residues" evidence="1">
    <location>
        <begin position="287"/>
        <end position="299"/>
    </location>
</feature>
<feature type="modified residue" description="Phosphoserine" evidence="14">
    <location>
        <position position="121"/>
    </location>
</feature>
<feature type="modified residue" description="Phosphoserine" evidence="10 11 13 14">
    <location>
        <position position="148"/>
    </location>
</feature>
<feature type="modified residue" description="Phosphoserine" evidence="11 14">
    <location>
        <position position="248"/>
    </location>
</feature>
<feature type="modified residue" description="Phosphoserine" evidence="14">
    <location>
        <position position="251"/>
    </location>
</feature>
<feature type="modified residue" description="Phosphoserine" evidence="5 10 12 13 14">
    <location>
        <position position="308"/>
    </location>
</feature>
<feature type="modified residue" description="Phosphoserine" evidence="12">
    <location>
        <position position="310"/>
    </location>
</feature>
<feature type="cross-link" description="Glycyl lysine isopeptide (Lys-Gly) (interchain with G-Cter in SUMO2)" evidence="18">
    <location>
        <position position="48"/>
    </location>
</feature>
<feature type="cross-link" description="Glycyl lysine isopeptide (Lys-Gly) (interchain with G-Cter in SUMO2)" evidence="18">
    <location>
        <position position="189"/>
    </location>
</feature>
<feature type="cross-link" description="Glycyl lysine isopeptide (Lys-Gly) (interchain with G-Cter in SUMO2)" evidence="15 16 17 18">
    <location>
        <position position="220"/>
    </location>
</feature>
<feature type="cross-link" description="Glycyl lysine isopeptide (Lys-Gly) (interchain with G-Cter in SUMO2)" evidence="15 18">
    <location>
        <position position="290"/>
    </location>
</feature>
<feature type="cross-link" description="Glycyl lysine isopeptide (Lys-Gly) (interchain with G-Cter in SUMO2)" evidence="18">
    <location>
        <position position="294"/>
    </location>
</feature>
<feature type="cross-link" description="Glycyl lysine isopeptide (Lys-Gly) (interchain with G-Cter in SUMO2)" evidence="15 16 17 18">
    <location>
        <position position="374"/>
    </location>
</feature>
<feature type="sequence variant" id="VAR_061607" description="In dbSNP:rs35875163.">
    <original>E</original>
    <variation>Q</variation>
    <location>
        <position position="58"/>
    </location>
</feature>
<feature type="strand" evidence="19">
    <location>
        <begin position="260"/>
        <end position="262"/>
    </location>
</feature>
<feature type="strand" evidence="19">
    <location>
        <begin position="274"/>
        <end position="278"/>
    </location>
</feature>
<organism>
    <name type="scientific">Homo sapiens</name>
    <name type="common">Human</name>
    <dbReference type="NCBI Taxonomy" id="9606"/>
    <lineage>
        <taxon>Eukaryota</taxon>
        <taxon>Metazoa</taxon>
        <taxon>Chordata</taxon>
        <taxon>Craniata</taxon>
        <taxon>Vertebrata</taxon>
        <taxon>Euteleostomi</taxon>
        <taxon>Mammalia</taxon>
        <taxon>Eutheria</taxon>
        <taxon>Euarchontoglires</taxon>
        <taxon>Primates</taxon>
        <taxon>Haplorrhini</taxon>
        <taxon>Catarrhini</taxon>
        <taxon>Hominidae</taxon>
        <taxon>Homo</taxon>
    </lineage>
</organism>
<sequence length="381" mass="41037">MALKAEGAALDCFEVTLKCEEGEDEEEAMVVAVIPRPEPMLRVTQQEKTPPPRPSPLEAGSDGCEEPKQQVSWEQEFLVGSSPGGSGRALCMVCGAEIRAPSADTARSHILEQHPHTLDLSPSEKSNILEAWSEGVALLQDVRAEQPSPPNSDSGQDAHPDPDANPDAARMPAEIVVLLDSEDNPSLPKRSRPRGLRPLELPAVPATEPGNKKPRGQRWKEPPGEEPVRKKRGRPMTKNLDPDPEPPSPDSPTETFAAPAEVRHFTDGSFPAGFVLQLFSHTQLRGPDSKDSPKDREVAEGGLPRAESPSPAPPPGLRGTLDLQVIRVRMEEPPAVSLLQDWSRHPQGTKRVGAGDTSDWPTVLSESSTTVAGKPEKGNGV</sequence>
<accession>Q9BUA3</accession>
<accession>Q68CV7</accession>
<accession>Q6PHS2</accession>
<accession>Q96IH0</accession>
<gene>
    <name evidence="6 8" type="primary">SPINDOC</name>
    <name type="synonym">C11orf84</name>
</gene>